<reference key="1">
    <citation type="journal article" date="2002" name="Proc. Natl. Acad. Sci. U.S.A.">
        <title>The complete genome of hyperthermophile Methanopyrus kandleri AV19 and monophyly of archaeal methanogens.</title>
        <authorList>
            <person name="Slesarev A.I."/>
            <person name="Mezhevaya K.V."/>
            <person name="Makarova K.S."/>
            <person name="Polushin N.N."/>
            <person name="Shcherbinina O.V."/>
            <person name="Shakhova V.V."/>
            <person name="Belova G.I."/>
            <person name="Aravind L."/>
            <person name="Natale D.A."/>
            <person name="Rogozin I.B."/>
            <person name="Tatusov R.L."/>
            <person name="Wolf Y.I."/>
            <person name="Stetter K.O."/>
            <person name="Malykh A.G."/>
            <person name="Koonin E.V."/>
            <person name="Kozyavkin S.A."/>
        </authorList>
    </citation>
    <scope>NUCLEOTIDE SEQUENCE [LARGE SCALE GENOMIC DNA]</scope>
    <source>
        <strain>AV19 / DSM 6324 / JCM 9639 / NBRC 100938</strain>
    </source>
</reference>
<gene>
    <name evidence="1" type="primary">apgM</name>
    <name type="ordered locus">MK1193</name>
</gene>
<evidence type="ECO:0000255" key="1">
    <source>
        <dbReference type="HAMAP-Rule" id="MF_01402"/>
    </source>
</evidence>
<evidence type="ECO:0000256" key="2">
    <source>
        <dbReference type="SAM" id="MobiDB-lite"/>
    </source>
</evidence>
<sequence length="422" mass="45625">MRVTGLERKILVIVGDGMADRAVPELDGKTPLQAADTPNMDRLAREGSVGLLDPIRPGVRPGSDTAHLTLLGYDPFEVYPGRGPLEALGAGVEVRPGDVAFRCNFATAEERNGELVVVDRRAGRINEDEGTPKLAETINEEVDLPVEFEFKEAVGHRAVLVLRGGDLSADVTDADPKRVGKPVKDVKPTSDDPAAARTAEIVNEFVRKAYEVLKDHPVNRERERQGKPPANVILPRGAGQLEEVEPFSDRYGMSGAVVAGASLIKGIGRMLGMDVPEDEAITGRKDTDLKRKAELALEALDDHDLVLVNFNAVDEAGHDGDARGKVEMIERMDRELVGTLLEGIDPEETVVCLTADHSTPVAVGDHTADPVPVAIWTADARRDPVEEYDEISAARGCLGRFSGLHLLNVLRDLADRIEKFGA</sequence>
<keyword id="KW-0324">Glycolysis</keyword>
<keyword id="KW-0413">Isomerase</keyword>
<keyword id="KW-1185">Reference proteome</keyword>
<proteinExistence type="inferred from homology"/>
<feature type="chain" id="PRO_0000138136" description="2,3-bisphosphoglycerate-independent phosphoglycerate mutase">
    <location>
        <begin position="1"/>
        <end position="422"/>
    </location>
</feature>
<feature type="region of interest" description="Disordered" evidence="2">
    <location>
        <begin position="173"/>
        <end position="194"/>
    </location>
</feature>
<feature type="compositionally biased region" description="Basic and acidic residues" evidence="2">
    <location>
        <begin position="174"/>
        <end position="190"/>
    </location>
</feature>
<comment type="function">
    <text evidence="1">Catalyzes the interconversion of 2-phosphoglycerate and 3-phosphoglycerate.</text>
</comment>
<comment type="catalytic activity">
    <reaction evidence="1">
        <text>(2R)-2-phosphoglycerate = (2R)-3-phosphoglycerate</text>
        <dbReference type="Rhea" id="RHEA:15901"/>
        <dbReference type="ChEBI" id="CHEBI:58272"/>
        <dbReference type="ChEBI" id="CHEBI:58289"/>
        <dbReference type="EC" id="5.4.2.12"/>
    </reaction>
</comment>
<comment type="pathway">
    <text evidence="1">Carbohydrate degradation; glycolysis; pyruvate from D-glyceraldehyde 3-phosphate: step 3/5.</text>
</comment>
<comment type="similarity">
    <text evidence="1">Belongs to the BPG-independent phosphoglycerate mutase family. A-PGAM subfamily.</text>
</comment>
<accession>P58813</accession>
<name>APGM_METKA</name>
<organism>
    <name type="scientific">Methanopyrus kandleri (strain AV19 / DSM 6324 / JCM 9639 / NBRC 100938)</name>
    <dbReference type="NCBI Taxonomy" id="190192"/>
    <lineage>
        <taxon>Archaea</taxon>
        <taxon>Methanobacteriati</taxon>
        <taxon>Methanobacteriota</taxon>
        <taxon>Methanomada group</taxon>
        <taxon>Methanopyri</taxon>
        <taxon>Methanopyrales</taxon>
        <taxon>Methanopyraceae</taxon>
        <taxon>Methanopyrus</taxon>
    </lineage>
</organism>
<dbReference type="EC" id="5.4.2.12" evidence="1"/>
<dbReference type="EMBL" id="AE009439">
    <property type="protein sequence ID" value="AAM02406.1"/>
    <property type="molecule type" value="Genomic_DNA"/>
</dbReference>
<dbReference type="RefSeq" id="WP_011019561.1">
    <property type="nucleotide sequence ID" value="NC_003551.1"/>
</dbReference>
<dbReference type="SMR" id="P58813"/>
<dbReference type="FunCoup" id="P58813">
    <property type="interactions" value="139"/>
</dbReference>
<dbReference type="STRING" id="190192.MK1193"/>
<dbReference type="PaxDb" id="190192-MK1193"/>
<dbReference type="EnsemblBacteria" id="AAM02406">
    <property type="protein sequence ID" value="AAM02406"/>
    <property type="gene ID" value="MK1193"/>
</dbReference>
<dbReference type="GeneID" id="1477294"/>
<dbReference type="KEGG" id="mka:MK1193"/>
<dbReference type="PATRIC" id="fig|190192.8.peg.1295"/>
<dbReference type="HOGENOM" id="CLU_034906_2_0_2"/>
<dbReference type="InParanoid" id="P58813"/>
<dbReference type="OrthoDB" id="52918at2157"/>
<dbReference type="UniPathway" id="UPA00109">
    <property type="reaction ID" value="UER00186"/>
</dbReference>
<dbReference type="Proteomes" id="UP000001826">
    <property type="component" value="Chromosome"/>
</dbReference>
<dbReference type="GO" id="GO:0046872">
    <property type="term" value="F:metal ion binding"/>
    <property type="evidence" value="ECO:0007669"/>
    <property type="project" value="InterPro"/>
</dbReference>
<dbReference type="GO" id="GO:0004619">
    <property type="term" value="F:phosphoglycerate mutase activity"/>
    <property type="evidence" value="ECO:0007669"/>
    <property type="project" value="UniProtKB-EC"/>
</dbReference>
<dbReference type="GO" id="GO:0006096">
    <property type="term" value="P:glycolytic process"/>
    <property type="evidence" value="ECO:0007669"/>
    <property type="project" value="UniProtKB-UniRule"/>
</dbReference>
<dbReference type="CDD" id="cd16011">
    <property type="entry name" value="iPGM_like"/>
    <property type="match status" value="1"/>
</dbReference>
<dbReference type="Gene3D" id="3.40.720.10">
    <property type="entry name" value="Alkaline Phosphatase, subunit A"/>
    <property type="match status" value="1"/>
</dbReference>
<dbReference type="Gene3D" id="3.30.70.2130">
    <property type="entry name" value="Metalloenzyme domain"/>
    <property type="match status" value="1"/>
</dbReference>
<dbReference type="HAMAP" id="MF_01402_A">
    <property type="entry name" value="ApgM_A"/>
    <property type="match status" value="1"/>
</dbReference>
<dbReference type="InterPro" id="IPR017850">
    <property type="entry name" value="Alkaline_phosphatase_core_sf"/>
</dbReference>
<dbReference type="InterPro" id="IPR023665">
    <property type="entry name" value="ApgAM_prokaryotes"/>
</dbReference>
<dbReference type="InterPro" id="IPR006124">
    <property type="entry name" value="Metalloenzyme"/>
</dbReference>
<dbReference type="InterPro" id="IPR004456">
    <property type="entry name" value="Pglycerate_mutase_ApgM"/>
</dbReference>
<dbReference type="InterPro" id="IPR042253">
    <property type="entry name" value="Pglycerate_mutase_ApgM_sf"/>
</dbReference>
<dbReference type="NCBIfam" id="TIGR00306">
    <property type="entry name" value="apgM"/>
    <property type="match status" value="1"/>
</dbReference>
<dbReference type="NCBIfam" id="NF003104">
    <property type="entry name" value="PRK04024.1"/>
    <property type="match status" value="1"/>
</dbReference>
<dbReference type="PANTHER" id="PTHR31209">
    <property type="entry name" value="COFACTOR-INDEPENDENT PHOSPHOGLYCERATE MUTASE"/>
    <property type="match status" value="1"/>
</dbReference>
<dbReference type="PANTHER" id="PTHR31209:SF0">
    <property type="entry name" value="METALLOENZYME DOMAIN-CONTAINING PROTEIN"/>
    <property type="match status" value="1"/>
</dbReference>
<dbReference type="Pfam" id="PF01676">
    <property type="entry name" value="Metalloenzyme"/>
    <property type="match status" value="1"/>
</dbReference>
<dbReference type="Pfam" id="PF10143">
    <property type="entry name" value="PhosphMutase"/>
    <property type="match status" value="1"/>
</dbReference>
<dbReference type="PIRSF" id="PIRSF006392">
    <property type="entry name" value="IPGAM_arch"/>
    <property type="match status" value="1"/>
</dbReference>
<dbReference type="SUPFAM" id="SSF53649">
    <property type="entry name" value="Alkaline phosphatase-like"/>
    <property type="match status" value="1"/>
</dbReference>
<protein>
    <recommendedName>
        <fullName evidence="1">2,3-bisphosphoglycerate-independent phosphoglycerate mutase</fullName>
        <shortName evidence="1">BPG-independent PGAM</shortName>
        <shortName evidence="1">Phosphoglyceromutase</shortName>
        <shortName evidence="1">aPGAM</shortName>
        <ecNumber evidence="1">5.4.2.12</ecNumber>
    </recommendedName>
</protein>